<accession>Q6GBV6</accession>
<feature type="chain" id="PRO_0000224827" description="Putative TrmH family tRNA/rRNA methyltransferase">
    <location>
        <begin position="1"/>
        <end position="248"/>
    </location>
</feature>
<feature type="binding site" evidence="1">
    <location>
        <position position="196"/>
    </location>
    <ligand>
        <name>S-adenosyl-L-methionine</name>
        <dbReference type="ChEBI" id="CHEBI:59789"/>
    </ligand>
</feature>
<feature type="binding site" evidence="1">
    <location>
        <position position="216"/>
    </location>
    <ligand>
        <name>S-adenosyl-L-methionine</name>
        <dbReference type="ChEBI" id="CHEBI:59789"/>
    </ligand>
</feature>
<feature type="binding site" evidence="1">
    <location>
        <position position="225"/>
    </location>
    <ligand>
        <name>S-adenosyl-L-methionine</name>
        <dbReference type="ChEBI" id="CHEBI:59789"/>
    </ligand>
</feature>
<protein>
    <recommendedName>
        <fullName>Putative TrmH family tRNA/rRNA methyltransferase</fullName>
        <ecNumber>2.1.1.-</ecNumber>
    </recommendedName>
</protein>
<reference key="1">
    <citation type="journal article" date="2004" name="Proc. Natl. Acad. Sci. U.S.A.">
        <title>Complete genomes of two clinical Staphylococcus aureus strains: evidence for the rapid evolution of virulence and drug resistance.</title>
        <authorList>
            <person name="Holden M.T.G."/>
            <person name="Feil E.J."/>
            <person name="Lindsay J.A."/>
            <person name="Peacock S.J."/>
            <person name="Day N.P.J."/>
            <person name="Enright M.C."/>
            <person name="Foster T.J."/>
            <person name="Moore C.E."/>
            <person name="Hurst L."/>
            <person name="Atkin R."/>
            <person name="Barron A."/>
            <person name="Bason N."/>
            <person name="Bentley S.D."/>
            <person name="Chillingworth C."/>
            <person name="Chillingworth T."/>
            <person name="Churcher C."/>
            <person name="Clark L."/>
            <person name="Corton C."/>
            <person name="Cronin A."/>
            <person name="Doggett J."/>
            <person name="Dowd L."/>
            <person name="Feltwell T."/>
            <person name="Hance Z."/>
            <person name="Harris B."/>
            <person name="Hauser H."/>
            <person name="Holroyd S."/>
            <person name="Jagels K."/>
            <person name="James K.D."/>
            <person name="Lennard N."/>
            <person name="Line A."/>
            <person name="Mayes R."/>
            <person name="Moule S."/>
            <person name="Mungall K."/>
            <person name="Ormond D."/>
            <person name="Quail M.A."/>
            <person name="Rabbinowitsch E."/>
            <person name="Rutherford K.M."/>
            <person name="Sanders M."/>
            <person name="Sharp S."/>
            <person name="Simmonds M."/>
            <person name="Stevens K."/>
            <person name="Whitehead S."/>
            <person name="Barrell B.G."/>
            <person name="Spratt B.G."/>
            <person name="Parkhill J."/>
        </authorList>
    </citation>
    <scope>NUCLEOTIDE SEQUENCE [LARGE SCALE GENOMIC DNA]</scope>
    <source>
        <strain>MSSA476</strain>
    </source>
</reference>
<comment type="similarity">
    <text evidence="2">Belongs to the class IV-like SAM-binding methyltransferase superfamily. RNA methyltransferase TrmH family.</text>
</comment>
<organism>
    <name type="scientific">Staphylococcus aureus (strain MSSA476)</name>
    <dbReference type="NCBI Taxonomy" id="282459"/>
    <lineage>
        <taxon>Bacteria</taxon>
        <taxon>Bacillati</taxon>
        <taxon>Bacillota</taxon>
        <taxon>Bacilli</taxon>
        <taxon>Bacillales</taxon>
        <taxon>Staphylococcaceae</taxon>
        <taxon>Staphylococcus</taxon>
    </lineage>
</organism>
<keyword id="KW-0489">Methyltransferase</keyword>
<keyword id="KW-0808">Transferase</keyword>
<sequence>MEDTVIVGRHAVREAIITGHPINKILIQEGIKKQQINEILKNAKDQKIIVQTVPKSKLDFLANAPHQGVAALIAPYEYADFDQFLKQQKEKEGLSTVLILDGLEDPHNLGSILRTADATGVDGVIIPKRRSVTLTQTVAKASTGAIEHVPVIRVTNLAKTIDELKDNGFWVAGTEANNATDYRNLEADMSLAIVIGSEGQGMSRLVSDKCDFYIKIPMVGHVNSLNASVAASLMMYEVFRKRHDVGEI</sequence>
<evidence type="ECO:0000250" key="1"/>
<evidence type="ECO:0000305" key="2"/>
<name>TRMHL_STAAS</name>
<gene>
    <name type="ordered locus">SAS0489</name>
</gene>
<proteinExistence type="inferred from homology"/>
<dbReference type="EC" id="2.1.1.-"/>
<dbReference type="EMBL" id="BX571857">
    <property type="protein sequence ID" value="CAG42264.1"/>
    <property type="molecule type" value="Genomic_DNA"/>
</dbReference>
<dbReference type="SMR" id="Q6GBV6"/>
<dbReference type="KEGG" id="sas:SAS0489"/>
<dbReference type="HOGENOM" id="CLU_021322_0_1_9"/>
<dbReference type="GO" id="GO:0005829">
    <property type="term" value="C:cytosol"/>
    <property type="evidence" value="ECO:0007669"/>
    <property type="project" value="TreeGrafter"/>
</dbReference>
<dbReference type="GO" id="GO:0003723">
    <property type="term" value="F:RNA binding"/>
    <property type="evidence" value="ECO:0007669"/>
    <property type="project" value="InterPro"/>
</dbReference>
<dbReference type="GO" id="GO:0008173">
    <property type="term" value="F:RNA methyltransferase activity"/>
    <property type="evidence" value="ECO:0007669"/>
    <property type="project" value="InterPro"/>
</dbReference>
<dbReference type="GO" id="GO:0032259">
    <property type="term" value="P:methylation"/>
    <property type="evidence" value="ECO:0007669"/>
    <property type="project" value="UniProtKB-KW"/>
</dbReference>
<dbReference type="GO" id="GO:0006396">
    <property type="term" value="P:RNA processing"/>
    <property type="evidence" value="ECO:0007669"/>
    <property type="project" value="InterPro"/>
</dbReference>
<dbReference type="CDD" id="cd18103">
    <property type="entry name" value="SpoU-like_RlmB"/>
    <property type="match status" value="1"/>
</dbReference>
<dbReference type="FunFam" id="3.40.1280.10:FF:000008">
    <property type="entry name" value="Group 3 RNA methyltransferase TrmH"/>
    <property type="match status" value="1"/>
</dbReference>
<dbReference type="Gene3D" id="3.30.1330.30">
    <property type="match status" value="1"/>
</dbReference>
<dbReference type="Gene3D" id="3.40.1280.10">
    <property type="match status" value="1"/>
</dbReference>
<dbReference type="InterPro" id="IPR029028">
    <property type="entry name" value="Alpha/beta_knot_MTases"/>
</dbReference>
<dbReference type="InterPro" id="IPR029064">
    <property type="entry name" value="Ribosomal_eL30-like_sf"/>
</dbReference>
<dbReference type="InterPro" id="IPR004441">
    <property type="entry name" value="rRNA_MeTrfase_TrmH"/>
</dbReference>
<dbReference type="InterPro" id="IPR001537">
    <property type="entry name" value="SpoU_MeTrfase"/>
</dbReference>
<dbReference type="InterPro" id="IPR013123">
    <property type="entry name" value="SpoU_subst-bd"/>
</dbReference>
<dbReference type="InterPro" id="IPR029026">
    <property type="entry name" value="tRNA_m1G_MTases_N"/>
</dbReference>
<dbReference type="NCBIfam" id="TIGR00186">
    <property type="entry name" value="rRNA_methyl_3"/>
    <property type="match status" value="1"/>
</dbReference>
<dbReference type="PANTHER" id="PTHR46429">
    <property type="entry name" value="23S RRNA (GUANOSINE-2'-O-)-METHYLTRANSFERASE RLMB"/>
    <property type="match status" value="1"/>
</dbReference>
<dbReference type="PANTHER" id="PTHR46429:SF1">
    <property type="entry name" value="23S RRNA (GUANOSINE-2'-O-)-METHYLTRANSFERASE RLMB"/>
    <property type="match status" value="1"/>
</dbReference>
<dbReference type="Pfam" id="PF00588">
    <property type="entry name" value="SpoU_methylase"/>
    <property type="match status" value="1"/>
</dbReference>
<dbReference type="Pfam" id="PF08032">
    <property type="entry name" value="SpoU_sub_bind"/>
    <property type="match status" value="1"/>
</dbReference>
<dbReference type="SMART" id="SM00967">
    <property type="entry name" value="SpoU_sub_bind"/>
    <property type="match status" value="1"/>
</dbReference>
<dbReference type="SUPFAM" id="SSF75217">
    <property type="entry name" value="alpha/beta knot"/>
    <property type="match status" value="1"/>
</dbReference>
<dbReference type="SUPFAM" id="SSF55315">
    <property type="entry name" value="L30e-like"/>
    <property type="match status" value="1"/>
</dbReference>